<keyword id="KW-0131">Cell cycle</keyword>
<keyword id="KW-0132">Cell division</keyword>
<keyword id="KW-0963">Cytoplasm</keyword>
<keyword id="KW-0238">DNA-binding</keyword>
<sequence length="198" mass="22704">MVATQNKNLKPNRKHQILESLALMLQNCPGQRITTAKLAAEVGFSEAALYRHFPSKARMFEGLIDFIEESIFSRINLILADHKEALVRCHHILHVLVVFAERNPGMCRILAGDALMGENERLRGRVHQFFEKLESQFKQVLRERKLREGKTFTINEAALASLLVSFAEGKISQYVRSGYSKKPSTDFNEQWQFLMANK</sequence>
<feature type="chain" id="PRO_0000413757" description="Nucleoid occlusion factor SlmA">
    <location>
        <begin position="1"/>
        <end position="198"/>
    </location>
</feature>
<feature type="domain" description="HTH tetR-type" evidence="1">
    <location>
        <begin position="11"/>
        <end position="71"/>
    </location>
</feature>
<feature type="DNA-binding region" description="H-T-H motif" evidence="1">
    <location>
        <begin position="34"/>
        <end position="53"/>
    </location>
</feature>
<protein>
    <recommendedName>
        <fullName evidence="1">Nucleoid occlusion factor SlmA</fullName>
    </recommendedName>
</protein>
<organism>
    <name type="scientific">Colwellia psychrerythraea (strain 34H / ATCC BAA-681)</name>
    <name type="common">Vibrio psychroerythus</name>
    <dbReference type="NCBI Taxonomy" id="167879"/>
    <lineage>
        <taxon>Bacteria</taxon>
        <taxon>Pseudomonadati</taxon>
        <taxon>Pseudomonadota</taxon>
        <taxon>Gammaproteobacteria</taxon>
        <taxon>Alteromonadales</taxon>
        <taxon>Colwelliaceae</taxon>
        <taxon>Colwellia</taxon>
    </lineage>
</organism>
<reference key="1">
    <citation type="journal article" date="2005" name="Proc. Natl. Acad. Sci. U.S.A.">
        <title>The psychrophilic lifestyle as revealed by the genome sequence of Colwellia psychrerythraea 34H through genomic and proteomic analyses.</title>
        <authorList>
            <person name="Methe B.A."/>
            <person name="Nelson K.E."/>
            <person name="Deming J.W."/>
            <person name="Momen B."/>
            <person name="Melamud E."/>
            <person name="Zhang X."/>
            <person name="Moult J."/>
            <person name="Madupu R."/>
            <person name="Nelson W.C."/>
            <person name="Dodson R.J."/>
            <person name="Brinkac L.M."/>
            <person name="Daugherty S.C."/>
            <person name="Durkin A.S."/>
            <person name="DeBoy R.T."/>
            <person name="Kolonay J.F."/>
            <person name="Sullivan S.A."/>
            <person name="Zhou L."/>
            <person name="Davidsen T.M."/>
            <person name="Wu M."/>
            <person name="Huston A.L."/>
            <person name="Lewis M."/>
            <person name="Weaver B."/>
            <person name="Weidman J.F."/>
            <person name="Khouri H."/>
            <person name="Utterback T.R."/>
            <person name="Feldblyum T.V."/>
            <person name="Fraser C.M."/>
        </authorList>
    </citation>
    <scope>NUCLEOTIDE SEQUENCE [LARGE SCALE GENOMIC DNA]</scope>
    <source>
        <strain>34H / ATCC BAA-681</strain>
    </source>
</reference>
<evidence type="ECO:0000255" key="1">
    <source>
        <dbReference type="HAMAP-Rule" id="MF_01839"/>
    </source>
</evidence>
<dbReference type="EMBL" id="CP000083">
    <property type="protein sequence ID" value="AAZ27936.1"/>
    <property type="molecule type" value="Genomic_DNA"/>
</dbReference>
<dbReference type="RefSeq" id="WP_011041056.1">
    <property type="nucleotide sequence ID" value="NC_003910.7"/>
</dbReference>
<dbReference type="SMR" id="Q48AG4"/>
<dbReference type="STRING" id="167879.CPS_0181"/>
<dbReference type="KEGG" id="cps:CPS_0181"/>
<dbReference type="eggNOG" id="COG1309">
    <property type="taxonomic scope" value="Bacteria"/>
</dbReference>
<dbReference type="HOGENOM" id="CLU_069356_5_0_6"/>
<dbReference type="Proteomes" id="UP000000547">
    <property type="component" value="Chromosome"/>
</dbReference>
<dbReference type="GO" id="GO:0043590">
    <property type="term" value="C:bacterial nucleoid"/>
    <property type="evidence" value="ECO:0007669"/>
    <property type="project" value="UniProtKB-UniRule"/>
</dbReference>
<dbReference type="GO" id="GO:0005737">
    <property type="term" value="C:cytoplasm"/>
    <property type="evidence" value="ECO:0007669"/>
    <property type="project" value="UniProtKB-UniRule"/>
</dbReference>
<dbReference type="GO" id="GO:0043565">
    <property type="term" value="F:sequence-specific DNA binding"/>
    <property type="evidence" value="ECO:0007669"/>
    <property type="project" value="UniProtKB-UniRule"/>
</dbReference>
<dbReference type="GO" id="GO:0051301">
    <property type="term" value="P:cell division"/>
    <property type="evidence" value="ECO:0007669"/>
    <property type="project" value="UniProtKB-KW"/>
</dbReference>
<dbReference type="GO" id="GO:0010974">
    <property type="term" value="P:negative regulation of division septum assembly"/>
    <property type="evidence" value="ECO:0007669"/>
    <property type="project" value="InterPro"/>
</dbReference>
<dbReference type="Gene3D" id="1.10.357.10">
    <property type="entry name" value="Tetracycline Repressor, domain 2"/>
    <property type="match status" value="1"/>
</dbReference>
<dbReference type="HAMAP" id="MF_01839">
    <property type="entry name" value="NO_factor_SlmA"/>
    <property type="match status" value="1"/>
</dbReference>
<dbReference type="InterPro" id="IPR009057">
    <property type="entry name" value="Homeodomain-like_sf"/>
</dbReference>
<dbReference type="InterPro" id="IPR050624">
    <property type="entry name" value="HTH-type_Tx_Regulator"/>
</dbReference>
<dbReference type="InterPro" id="IPR001647">
    <property type="entry name" value="HTH_TetR"/>
</dbReference>
<dbReference type="InterPro" id="IPR023769">
    <property type="entry name" value="NO_SlmA"/>
</dbReference>
<dbReference type="InterPro" id="IPR054580">
    <property type="entry name" value="SlmA-like_C"/>
</dbReference>
<dbReference type="InterPro" id="IPR036271">
    <property type="entry name" value="Tet_transcr_reg_TetR-rel_C_sf"/>
</dbReference>
<dbReference type="NCBIfam" id="NF007015">
    <property type="entry name" value="PRK09480.1"/>
    <property type="match status" value="1"/>
</dbReference>
<dbReference type="PANTHER" id="PTHR43479">
    <property type="entry name" value="ACREF/ENVCD OPERON REPRESSOR-RELATED"/>
    <property type="match status" value="1"/>
</dbReference>
<dbReference type="PANTHER" id="PTHR43479:SF11">
    <property type="entry name" value="ACREF_ENVCD OPERON REPRESSOR-RELATED"/>
    <property type="match status" value="1"/>
</dbReference>
<dbReference type="Pfam" id="PF22276">
    <property type="entry name" value="SlmA-like_C"/>
    <property type="match status" value="1"/>
</dbReference>
<dbReference type="Pfam" id="PF00440">
    <property type="entry name" value="TetR_N"/>
    <property type="match status" value="1"/>
</dbReference>
<dbReference type="SUPFAM" id="SSF46689">
    <property type="entry name" value="Homeodomain-like"/>
    <property type="match status" value="1"/>
</dbReference>
<dbReference type="SUPFAM" id="SSF48498">
    <property type="entry name" value="Tetracyclin repressor-like, C-terminal domain"/>
    <property type="match status" value="1"/>
</dbReference>
<dbReference type="PROSITE" id="PS50977">
    <property type="entry name" value="HTH_TETR_2"/>
    <property type="match status" value="1"/>
</dbReference>
<comment type="function">
    <text evidence="1">Required for nucleoid occlusion (NO) phenomenon, which prevents Z-ring formation and cell division over the nucleoid. Acts as a DNA-associated cell division inhibitor that binds simultaneously chromosomal DNA and FtsZ, and disrupts the assembly of FtsZ polymers. SlmA-DNA-binding sequences (SBS) are dispersed on non-Ter regions of the chromosome, preventing FtsZ polymerization at these regions.</text>
</comment>
<comment type="subunit">
    <text evidence="1">Homodimer. Interacts with FtsZ.</text>
</comment>
<comment type="subcellular location">
    <subcellularLocation>
        <location evidence="1">Cytoplasm</location>
        <location evidence="1">Nucleoid</location>
    </subcellularLocation>
</comment>
<comment type="similarity">
    <text evidence="1">Belongs to the nucleoid occlusion factor SlmA family.</text>
</comment>
<accession>Q48AG4</accession>
<gene>
    <name evidence="1" type="primary">slmA</name>
    <name type="ordered locus">CPS_0181</name>
</gene>
<name>SLMA_COLP3</name>
<proteinExistence type="inferred from homology"/>